<organism>
    <name type="scientific">Trichechus manatus</name>
    <name type="common">Caribbean manatee</name>
    <name type="synonym">West Indian manatee</name>
    <dbReference type="NCBI Taxonomy" id="9778"/>
    <lineage>
        <taxon>Eukaryota</taxon>
        <taxon>Metazoa</taxon>
        <taxon>Chordata</taxon>
        <taxon>Craniata</taxon>
        <taxon>Vertebrata</taxon>
        <taxon>Euteleostomi</taxon>
        <taxon>Mammalia</taxon>
        <taxon>Eutheria</taxon>
        <taxon>Afrotheria</taxon>
        <taxon>Sirenia</taxon>
        <taxon>Trichechidae</taxon>
        <taxon>Trichechus</taxon>
    </lineage>
</organism>
<comment type="subunit">
    <text>Heterotetramer of two delta chains and two alpha chains.</text>
</comment>
<comment type="tissue specificity">
    <text>Red blood cells.</text>
</comment>
<comment type="similarity">
    <text evidence="2">Belongs to the globin family.</text>
</comment>
<name>HBD_TRIMA</name>
<keyword id="KW-0349">Heme</keyword>
<keyword id="KW-0408">Iron</keyword>
<keyword id="KW-0479">Metal-binding</keyword>
<keyword id="KW-0561">Oxygen transport</keyword>
<keyword id="KW-0597">Phosphoprotein</keyword>
<keyword id="KW-0813">Transport</keyword>
<proteinExistence type="evidence at transcript level"/>
<sequence length="147" mass="16311">MVHLTPEEKALVIGLWAKVNVKEYGGEALGRLLVVYPWTQRFFEHFGDLSSASAIMNNPKVKAHGEKVFTSFGDGLKHLEDLKGAFAELSELHCDKLHVDPENFRLLGNVLVCVLARHFGKEFSPEAQAAYQKVVAGVANALAHKYH</sequence>
<dbReference type="EMBL" id="DQ091203">
    <property type="protein sequence ID" value="AAZ22676.1"/>
    <property type="molecule type" value="Genomic_DNA"/>
</dbReference>
<dbReference type="SMR" id="Q45XI8"/>
<dbReference type="GO" id="GO:0072562">
    <property type="term" value="C:blood microparticle"/>
    <property type="evidence" value="ECO:0007669"/>
    <property type="project" value="TreeGrafter"/>
</dbReference>
<dbReference type="GO" id="GO:0031838">
    <property type="term" value="C:haptoglobin-hemoglobin complex"/>
    <property type="evidence" value="ECO:0007669"/>
    <property type="project" value="TreeGrafter"/>
</dbReference>
<dbReference type="GO" id="GO:0005833">
    <property type="term" value="C:hemoglobin complex"/>
    <property type="evidence" value="ECO:0007669"/>
    <property type="project" value="InterPro"/>
</dbReference>
<dbReference type="GO" id="GO:0031720">
    <property type="term" value="F:haptoglobin binding"/>
    <property type="evidence" value="ECO:0007669"/>
    <property type="project" value="TreeGrafter"/>
</dbReference>
<dbReference type="GO" id="GO:0020037">
    <property type="term" value="F:heme binding"/>
    <property type="evidence" value="ECO:0007669"/>
    <property type="project" value="InterPro"/>
</dbReference>
<dbReference type="GO" id="GO:0031721">
    <property type="term" value="F:hemoglobin alpha binding"/>
    <property type="evidence" value="ECO:0007669"/>
    <property type="project" value="TreeGrafter"/>
</dbReference>
<dbReference type="GO" id="GO:0046872">
    <property type="term" value="F:metal ion binding"/>
    <property type="evidence" value="ECO:0007669"/>
    <property type="project" value="UniProtKB-KW"/>
</dbReference>
<dbReference type="GO" id="GO:0043177">
    <property type="term" value="F:organic acid binding"/>
    <property type="evidence" value="ECO:0007669"/>
    <property type="project" value="TreeGrafter"/>
</dbReference>
<dbReference type="GO" id="GO:0019825">
    <property type="term" value="F:oxygen binding"/>
    <property type="evidence" value="ECO:0007669"/>
    <property type="project" value="InterPro"/>
</dbReference>
<dbReference type="GO" id="GO:0005344">
    <property type="term" value="F:oxygen carrier activity"/>
    <property type="evidence" value="ECO:0007669"/>
    <property type="project" value="UniProtKB-KW"/>
</dbReference>
<dbReference type="GO" id="GO:0004601">
    <property type="term" value="F:peroxidase activity"/>
    <property type="evidence" value="ECO:0007669"/>
    <property type="project" value="TreeGrafter"/>
</dbReference>
<dbReference type="GO" id="GO:0042744">
    <property type="term" value="P:hydrogen peroxide catabolic process"/>
    <property type="evidence" value="ECO:0007669"/>
    <property type="project" value="TreeGrafter"/>
</dbReference>
<dbReference type="CDD" id="cd08925">
    <property type="entry name" value="Hb-beta-like"/>
    <property type="match status" value="1"/>
</dbReference>
<dbReference type="FunFam" id="1.10.490.10:FF:000001">
    <property type="entry name" value="Hemoglobin subunit beta"/>
    <property type="match status" value="1"/>
</dbReference>
<dbReference type="Gene3D" id="1.10.490.10">
    <property type="entry name" value="Globins"/>
    <property type="match status" value="1"/>
</dbReference>
<dbReference type="InterPro" id="IPR000971">
    <property type="entry name" value="Globin"/>
</dbReference>
<dbReference type="InterPro" id="IPR009050">
    <property type="entry name" value="Globin-like_sf"/>
</dbReference>
<dbReference type="InterPro" id="IPR012292">
    <property type="entry name" value="Globin/Proto"/>
</dbReference>
<dbReference type="InterPro" id="IPR002337">
    <property type="entry name" value="Hemoglobin_b"/>
</dbReference>
<dbReference type="InterPro" id="IPR050056">
    <property type="entry name" value="Hemoglobin_oxygen_transport"/>
</dbReference>
<dbReference type="PANTHER" id="PTHR11442">
    <property type="entry name" value="HEMOGLOBIN FAMILY MEMBER"/>
    <property type="match status" value="1"/>
</dbReference>
<dbReference type="PANTHER" id="PTHR11442:SF42">
    <property type="entry name" value="HEMOGLOBIN SUBUNIT BETA"/>
    <property type="match status" value="1"/>
</dbReference>
<dbReference type="Pfam" id="PF00042">
    <property type="entry name" value="Globin"/>
    <property type="match status" value="1"/>
</dbReference>
<dbReference type="PRINTS" id="PR00814">
    <property type="entry name" value="BETAHAEM"/>
</dbReference>
<dbReference type="SUPFAM" id="SSF46458">
    <property type="entry name" value="Globin-like"/>
    <property type="match status" value="1"/>
</dbReference>
<dbReference type="PROSITE" id="PS01033">
    <property type="entry name" value="GLOBIN"/>
    <property type="match status" value="1"/>
</dbReference>
<accession>Q45XI8</accession>
<evidence type="ECO:0000250" key="1">
    <source>
        <dbReference type="UniProtKB" id="P02042"/>
    </source>
</evidence>
<evidence type="ECO:0000255" key="2">
    <source>
        <dbReference type="PROSITE-ProRule" id="PRU00238"/>
    </source>
</evidence>
<gene>
    <name type="primary">HBD</name>
</gene>
<protein>
    <recommendedName>
        <fullName>Hemoglobin subunit delta</fullName>
    </recommendedName>
    <alternativeName>
        <fullName>Delta-globin</fullName>
    </alternativeName>
    <alternativeName>
        <fullName>Hemoglobin delta chain</fullName>
    </alternativeName>
</protein>
<feature type="chain" id="PRO_0000053181" description="Hemoglobin subunit delta">
    <location>
        <begin position="1"/>
        <end position="147"/>
    </location>
</feature>
<feature type="domain" description="Globin" evidence="2">
    <location>
        <begin position="3"/>
        <end position="147"/>
    </location>
</feature>
<feature type="binding site" description="distal binding residue">
    <location>
        <position position="64"/>
    </location>
    <ligand>
        <name>heme b</name>
        <dbReference type="ChEBI" id="CHEBI:60344"/>
    </ligand>
    <ligandPart>
        <name>Fe</name>
        <dbReference type="ChEBI" id="CHEBI:18248"/>
    </ligandPart>
</feature>
<feature type="binding site" description="proximal binding residue">
    <location>
        <position position="93"/>
    </location>
    <ligand>
        <name>heme b</name>
        <dbReference type="ChEBI" id="CHEBI:60344"/>
    </ligand>
    <ligandPart>
        <name>Fe</name>
        <dbReference type="ChEBI" id="CHEBI:18248"/>
    </ligandPart>
</feature>
<feature type="modified residue" description="Phosphoserine" evidence="1">
    <location>
        <position position="51"/>
    </location>
</feature>
<reference key="1">
    <citation type="submission" date="2005-06" db="EMBL/GenBank/DDBJ databases">
        <title>Atypical molecular evolution of afrotherian and xenarthran beta-globin cluster genes.</title>
        <authorList>
            <person name="Sloan A.M."/>
            <person name="Campbell K.L."/>
        </authorList>
    </citation>
    <scope>NUCLEOTIDE SEQUENCE [GENOMIC DNA]</scope>
</reference>